<organism>
    <name type="scientific">Aspergillus fumigatus (strain CBS 144.89 / FGSC A1163 / CEA10)</name>
    <name type="common">Neosartorya fumigata</name>
    <dbReference type="NCBI Taxonomy" id="451804"/>
    <lineage>
        <taxon>Eukaryota</taxon>
        <taxon>Fungi</taxon>
        <taxon>Dikarya</taxon>
        <taxon>Ascomycota</taxon>
        <taxon>Pezizomycotina</taxon>
        <taxon>Eurotiomycetes</taxon>
        <taxon>Eurotiomycetidae</taxon>
        <taxon>Eurotiales</taxon>
        <taxon>Aspergillaceae</taxon>
        <taxon>Aspergillus</taxon>
        <taxon>Aspergillus subgen. Fumigati</taxon>
    </lineage>
</organism>
<protein>
    <recommendedName>
        <fullName evidence="1">ATP-dependent DNA helicase mph1</fullName>
        <ecNumber evidence="1 2">3.6.4.12</ecNumber>
    </recommendedName>
    <alternativeName>
        <fullName evidence="2">FANCM-like protein 1</fullName>
    </alternativeName>
</protein>
<reference key="1">
    <citation type="journal article" date="2008" name="PLoS Genet.">
        <title>Genomic islands in the pathogenic filamentous fungus Aspergillus fumigatus.</title>
        <authorList>
            <person name="Fedorova N.D."/>
            <person name="Khaldi N."/>
            <person name="Joardar V.S."/>
            <person name="Maiti R."/>
            <person name="Amedeo P."/>
            <person name="Anderson M.J."/>
            <person name="Crabtree J."/>
            <person name="Silva J.C."/>
            <person name="Badger J.H."/>
            <person name="Albarraq A."/>
            <person name="Angiuoli S."/>
            <person name="Bussey H."/>
            <person name="Bowyer P."/>
            <person name="Cotty P.J."/>
            <person name="Dyer P.S."/>
            <person name="Egan A."/>
            <person name="Galens K."/>
            <person name="Fraser-Liggett C.M."/>
            <person name="Haas B.J."/>
            <person name="Inman J.M."/>
            <person name="Kent R."/>
            <person name="Lemieux S."/>
            <person name="Malavazi I."/>
            <person name="Orvis J."/>
            <person name="Roemer T."/>
            <person name="Ronning C.M."/>
            <person name="Sundaram J.P."/>
            <person name="Sutton G."/>
            <person name="Turner G."/>
            <person name="Venter J.C."/>
            <person name="White O.R."/>
            <person name="Whitty B.R."/>
            <person name="Youngman P."/>
            <person name="Wolfe K.H."/>
            <person name="Goldman G.H."/>
            <person name="Wortman J.R."/>
            <person name="Jiang B."/>
            <person name="Denning D.W."/>
            <person name="Nierman W.C."/>
        </authorList>
    </citation>
    <scope>NUCLEOTIDE SEQUENCE [LARGE SCALE GENOMIC DNA]</scope>
    <source>
        <strain>CBS 144.89 / FGSC A1163 / CEA10</strain>
    </source>
</reference>
<gene>
    <name evidence="1" type="primary">mph1</name>
    <name type="ORF">AFUB_003450</name>
</gene>
<comment type="function">
    <text evidence="2">ATP-dependent DNA helicase involved in DNA damage repair by homologous recombination and in genome maintenance. Capable of unwinding D-loops. Plays a role in limiting crossover recombinants during mitotic DNA double-strand break (DSB) repair. Component of a FANCM-MHF complex which promotes gene conversion at blocked replication forks, probably by reversal of the stalled fork.</text>
</comment>
<comment type="catalytic activity">
    <reaction evidence="2">
        <text>ATP + H2O = ADP + phosphate + H(+)</text>
        <dbReference type="Rhea" id="RHEA:13065"/>
        <dbReference type="ChEBI" id="CHEBI:15377"/>
        <dbReference type="ChEBI" id="CHEBI:15378"/>
        <dbReference type="ChEBI" id="CHEBI:30616"/>
        <dbReference type="ChEBI" id="CHEBI:43474"/>
        <dbReference type="ChEBI" id="CHEBI:456216"/>
        <dbReference type="EC" id="3.6.4.12"/>
    </reaction>
</comment>
<comment type="subunit">
    <text evidence="2">Interacts with the MHF histone-fold complex to form the FANCM-MHF complex.</text>
</comment>
<comment type="subcellular location">
    <subcellularLocation>
        <location evidence="1">Nucleus</location>
    </subcellularLocation>
</comment>
<comment type="similarity">
    <text evidence="6">Belongs to the DEAD box helicase family. DEAH subfamily. FANCM sub-subfamily.</text>
</comment>
<accession>B0XMV6</accession>
<evidence type="ECO:0000250" key="1">
    <source>
        <dbReference type="UniProtKB" id="P40562"/>
    </source>
</evidence>
<evidence type="ECO:0000250" key="2">
    <source>
        <dbReference type="UniProtKB" id="Q9UT23"/>
    </source>
</evidence>
<evidence type="ECO:0000255" key="3">
    <source>
        <dbReference type="PROSITE-ProRule" id="PRU00541"/>
    </source>
</evidence>
<evidence type="ECO:0000255" key="4">
    <source>
        <dbReference type="PROSITE-ProRule" id="PRU00542"/>
    </source>
</evidence>
<evidence type="ECO:0000256" key="5">
    <source>
        <dbReference type="SAM" id="MobiDB-lite"/>
    </source>
</evidence>
<evidence type="ECO:0000305" key="6"/>
<dbReference type="EC" id="3.6.4.12" evidence="1 2"/>
<dbReference type="EMBL" id="DS499594">
    <property type="protein sequence ID" value="EDP55648.1"/>
    <property type="molecule type" value="Genomic_DNA"/>
</dbReference>
<dbReference type="SMR" id="B0XMV6"/>
<dbReference type="EnsemblFungi" id="EDP55648">
    <property type="protein sequence ID" value="EDP55648"/>
    <property type="gene ID" value="AFUB_003450"/>
</dbReference>
<dbReference type="VEuPathDB" id="FungiDB:AFUB_003450"/>
<dbReference type="HOGENOM" id="CLU_002513_0_0_1"/>
<dbReference type="OrthoDB" id="120791at5052"/>
<dbReference type="PhylomeDB" id="B0XMV6"/>
<dbReference type="Proteomes" id="UP000001699">
    <property type="component" value="Unassembled WGS sequence"/>
</dbReference>
<dbReference type="GO" id="GO:0005634">
    <property type="term" value="C:nucleus"/>
    <property type="evidence" value="ECO:0007669"/>
    <property type="project" value="UniProtKB-SubCell"/>
</dbReference>
<dbReference type="GO" id="GO:0043138">
    <property type="term" value="F:3'-5' DNA helicase activity"/>
    <property type="evidence" value="ECO:0007669"/>
    <property type="project" value="InterPro"/>
</dbReference>
<dbReference type="GO" id="GO:0005524">
    <property type="term" value="F:ATP binding"/>
    <property type="evidence" value="ECO:0007669"/>
    <property type="project" value="UniProtKB-KW"/>
</dbReference>
<dbReference type="GO" id="GO:0016887">
    <property type="term" value="F:ATP hydrolysis activity"/>
    <property type="evidence" value="ECO:0007669"/>
    <property type="project" value="RHEA"/>
</dbReference>
<dbReference type="GO" id="GO:0000400">
    <property type="term" value="F:four-way junction DNA binding"/>
    <property type="evidence" value="ECO:0007669"/>
    <property type="project" value="TreeGrafter"/>
</dbReference>
<dbReference type="GO" id="GO:0009378">
    <property type="term" value="F:four-way junction helicase activity"/>
    <property type="evidence" value="ECO:0007669"/>
    <property type="project" value="TreeGrafter"/>
</dbReference>
<dbReference type="GO" id="GO:0045003">
    <property type="term" value="P:double-strand break repair via synthesis-dependent strand annealing"/>
    <property type="evidence" value="ECO:0007669"/>
    <property type="project" value="TreeGrafter"/>
</dbReference>
<dbReference type="GO" id="GO:0036297">
    <property type="term" value="P:interstrand cross-link repair"/>
    <property type="evidence" value="ECO:0007669"/>
    <property type="project" value="TreeGrafter"/>
</dbReference>
<dbReference type="CDD" id="cd18033">
    <property type="entry name" value="DEXDc_FANCM"/>
    <property type="match status" value="1"/>
</dbReference>
<dbReference type="CDD" id="cd12091">
    <property type="entry name" value="FANCM_ID"/>
    <property type="match status" value="1"/>
</dbReference>
<dbReference type="CDD" id="cd18801">
    <property type="entry name" value="SF2_C_FANCM_Hef"/>
    <property type="match status" value="1"/>
</dbReference>
<dbReference type="FunFam" id="3.40.50.300:FF:000861">
    <property type="entry name" value="Fanconi anemia, complementation group M"/>
    <property type="match status" value="1"/>
</dbReference>
<dbReference type="Gene3D" id="1.20.1320.20">
    <property type="entry name" value="hef helicase domain"/>
    <property type="match status" value="1"/>
</dbReference>
<dbReference type="Gene3D" id="3.40.50.300">
    <property type="entry name" value="P-loop containing nucleotide triphosphate hydrolases"/>
    <property type="match status" value="2"/>
</dbReference>
<dbReference type="InterPro" id="IPR039686">
    <property type="entry name" value="FANCM/Mph1-like_ID"/>
</dbReference>
<dbReference type="InterPro" id="IPR044749">
    <property type="entry name" value="FANCM_DEXDc"/>
</dbReference>
<dbReference type="InterPro" id="IPR006935">
    <property type="entry name" value="Helicase/UvrB_N"/>
</dbReference>
<dbReference type="InterPro" id="IPR014001">
    <property type="entry name" value="Helicase_ATP-bd"/>
</dbReference>
<dbReference type="InterPro" id="IPR001650">
    <property type="entry name" value="Helicase_C-like"/>
</dbReference>
<dbReference type="InterPro" id="IPR027417">
    <property type="entry name" value="P-loop_NTPase"/>
</dbReference>
<dbReference type="PANTHER" id="PTHR14025">
    <property type="entry name" value="FANCONI ANEMIA GROUP M FANCM FAMILY MEMBER"/>
    <property type="match status" value="1"/>
</dbReference>
<dbReference type="PANTHER" id="PTHR14025:SF20">
    <property type="entry name" value="FANCONI ANEMIA GROUP M PROTEIN"/>
    <property type="match status" value="1"/>
</dbReference>
<dbReference type="Pfam" id="PF00271">
    <property type="entry name" value="Helicase_C"/>
    <property type="match status" value="1"/>
</dbReference>
<dbReference type="Pfam" id="PF04851">
    <property type="entry name" value="ResIII"/>
    <property type="match status" value="1"/>
</dbReference>
<dbReference type="SMART" id="SM00487">
    <property type="entry name" value="DEXDc"/>
    <property type="match status" value="1"/>
</dbReference>
<dbReference type="SMART" id="SM00490">
    <property type="entry name" value="HELICc"/>
    <property type="match status" value="1"/>
</dbReference>
<dbReference type="SUPFAM" id="SSF52540">
    <property type="entry name" value="P-loop containing nucleoside triphosphate hydrolases"/>
    <property type="match status" value="1"/>
</dbReference>
<dbReference type="PROSITE" id="PS51192">
    <property type="entry name" value="HELICASE_ATP_BIND_1"/>
    <property type="match status" value="1"/>
</dbReference>
<dbReference type="PROSITE" id="PS51194">
    <property type="entry name" value="HELICASE_CTER"/>
    <property type="match status" value="1"/>
</dbReference>
<name>MPH1_ASPFC</name>
<keyword id="KW-0067">ATP-binding</keyword>
<keyword id="KW-0227">DNA damage</keyword>
<keyword id="KW-0234">DNA repair</keyword>
<keyword id="KW-0238">DNA-binding</keyword>
<keyword id="KW-0347">Helicase</keyword>
<keyword id="KW-0378">Hydrolase</keyword>
<keyword id="KW-0547">Nucleotide-binding</keyword>
<keyword id="KW-0539">Nucleus</keyword>
<sequence length="1101" mass="123391">MSVSGDDFDDYFDDEIDDVIVPGTSDTVESVQTNNRPAKQSDISISQGNEEDEFQSPDRLSGNAVQFEDVERTSKYNVFIPKCKNVQENIFVTQLTQPPSPPEMIRGPRWKKPGPEPLAPEPATTRVGANHQSDQYHDEDKEMEAAIAASLRSFEEENGGDVPSTASGSTPARTAAAPCAAPKGTAADVPFDLDDIPDDAFDSDLSLSPPRSTSQATRGPPVQSQFRTNRPLGLRQSTLFDMAARNPDISSQRGEQIFSPPEKSEPPTHHKLNEEALNTWVYPTNLGKTRDYQFNIAQRGLFHNLLVALPTGLGKTFIAATIMLNWYRWTKSAQIIFVAPTKPLVAQQISACFQVAGIPRSETTMLTGEAAPGIRAEEWKSKRVFFMTPQTLVNDLKSGIADPKRIVLLVVDEAHRATGGYAYVEVVKFLKRYNKSFRVLALTATPGSTVESVQAIIDDLGIAKVEIRTEQSLDIREYVHARDTEVQTFQNSDEMVLCMELFTRTLQPLVDQLRNLNAYWGRDPMALTAFGLTKARQQWMGSDAGRNANLALKGKVNAIFTVLASLAHAIDLLKYHGITPFYRHLLHFQSNTDGQKGGKYQRQIVQDESFKKLMNHLQPWTKNPDFIGHPKLEYLKQVVLNHFMDRGEGTAANGDQSQSATRIMIFVHFRDSAEEVVRVLKRHEPLIRPHVFVGQSSAKGSEGMDQKTQLSIVQKFKKGTYNTIVATSIGEEGLDIGEVDLIVCYDSSASPIRMLQRMGRTGRKRAGNIVLLLMQGKEEESYIKAKDNYEKMQQMIASGTRFTFHDDKSPRILPPGVRPVAEKRQIDIPVENTQADLPEPRRRARPPKRPPKKFHMPDDVETGFAKASSLTGKVTKKAETKRAVRKPTPEPVEVPALEEVLLTPRQQQDLERRYCHIAGTSPEFIRNPRVDAYPRLQSVPRPTKAVKHGSLTSRMIGTLQKMGKVSVDCESRYRKVLALDSSKEIVDSVLSRDPWPPAKNSGRLGEKTHAFKRPSATPRPNNVHVREDENEDNCTPELVSPEKLMSSFLEPHTERPPYSSQRSQDAFELDFPDVETLLNRSAERHVSRKRNRFVLDDDSDE</sequence>
<proteinExistence type="inferred from homology"/>
<feature type="chain" id="PRO_0000333365" description="ATP-dependent DNA helicase mph1">
    <location>
        <begin position="1"/>
        <end position="1101"/>
    </location>
</feature>
<feature type="domain" description="Helicase ATP-binding" evidence="3">
    <location>
        <begin position="296"/>
        <end position="464"/>
    </location>
</feature>
<feature type="domain" description="Helicase C-terminal" evidence="4">
    <location>
        <begin position="634"/>
        <end position="808"/>
    </location>
</feature>
<feature type="region of interest" description="Disordered" evidence="5">
    <location>
        <begin position="22"/>
        <end position="59"/>
    </location>
</feature>
<feature type="region of interest" description="Disordered" evidence="5">
    <location>
        <begin position="95"/>
        <end position="138"/>
    </location>
</feature>
<feature type="region of interest" description="Disordered" evidence="5">
    <location>
        <begin position="154"/>
        <end position="231"/>
    </location>
</feature>
<feature type="region of interest" description="Disordered" evidence="5">
    <location>
        <begin position="250"/>
        <end position="270"/>
    </location>
</feature>
<feature type="region of interest" description="Disordered" evidence="5">
    <location>
        <begin position="824"/>
        <end position="890"/>
    </location>
</feature>
<feature type="region of interest" description="Disordered" evidence="5">
    <location>
        <begin position="991"/>
        <end position="1067"/>
    </location>
</feature>
<feature type="short sequence motif" description="DEAH box" evidence="3">
    <location>
        <begin position="412"/>
        <end position="415"/>
    </location>
</feature>
<feature type="compositionally biased region" description="Polar residues" evidence="5">
    <location>
        <begin position="24"/>
        <end position="48"/>
    </location>
</feature>
<feature type="compositionally biased region" description="Low complexity" evidence="5">
    <location>
        <begin position="170"/>
        <end position="190"/>
    </location>
</feature>
<feature type="compositionally biased region" description="Acidic residues" evidence="5">
    <location>
        <begin position="191"/>
        <end position="202"/>
    </location>
</feature>
<feature type="compositionally biased region" description="Polar residues" evidence="5">
    <location>
        <begin position="209"/>
        <end position="228"/>
    </location>
</feature>
<feature type="compositionally biased region" description="Basic residues" evidence="5">
    <location>
        <begin position="842"/>
        <end position="854"/>
    </location>
</feature>
<feature type="binding site" evidence="3">
    <location>
        <begin position="309"/>
        <end position="316"/>
    </location>
    <ligand>
        <name>ATP</name>
        <dbReference type="ChEBI" id="CHEBI:30616"/>
    </ligand>
</feature>